<dbReference type="EMBL" id="CP000438">
    <property type="protein sequence ID" value="ABJ10111.1"/>
    <property type="molecule type" value="Genomic_DNA"/>
</dbReference>
<dbReference type="RefSeq" id="WP_003140783.1">
    <property type="nucleotide sequence ID" value="NZ_CP034244.1"/>
</dbReference>
<dbReference type="SMR" id="Q02IB2"/>
<dbReference type="KEGG" id="pau:PA14_51960"/>
<dbReference type="PseudoCAP" id="PA14_51960"/>
<dbReference type="HOGENOM" id="CLU_032288_1_0_6"/>
<dbReference type="BioCyc" id="PAER208963:G1G74-4372-MONOMER"/>
<dbReference type="Proteomes" id="UP000000653">
    <property type="component" value="Chromosome"/>
</dbReference>
<dbReference type="GO" id="GO:0005886">
    <property type="term" value="C:plasma membrane"/>
    <property type="evidence" value="ECO:0007669"/>
    <property type="project" value="UniProtKB-SubCell"/>
</dbReference>
<dbReference type="HAMAP" id="MF_00672">
    <property type="entry name" value="UPF0761"/>
    <property type="match status" value="1"/>
</dbReference>
<dbReference type="InterPro" id="IPR023679">
    <property type="entry name" value="UPF0761_bac"/>
</dbReference>
<dbReference type="InterPro" id="IPR017039">
    <property type="entry name" value="Virul_fac_BrkB"/>
</dbReference>
<dbReference type="NCBIfam" id="TIGR00765">
    <property type="entry name" value="yihY_not_rbn"/>
    <property type="match status" value="1"/>
</dbReference>
<dbReference type="PANTHER" id="PTHR30213">
    <property type="entry name" value="INNER MEMBRANE PROTEIN YHJD"/>
    <property type="match status" value="1"/>
</dbReference>
<dbReference type="PANTHER" id="PTHR30213:SF0">
    <property type="entry name" value="UPF0761 MEMBRANE PROTEIN YIHY"/>
    <property type="match status" value="1"/>
</dbReference>
<dbReference type="Pfam" id="PF03631">
    <property type="entry name" value="Virul_fac_BrkB"/>
    <property type="match status" value="1"/>
</dbReference>
<proteinExistence type="inferred from homology"/>
<comment type="subcellular location">
    <subcellularLocation>
        <location evidence="1">Cell inner membrane</location>
        <topology evidence="1">Multi-pass membrane protein</topology>
    </subcellularLocation>
</comment>
<comment type="similarity">
    <text evidence="1">Belongs to the UPF0761 family.</text>
</comment>
<accession>Q02IB2</accession>
<gene>
    <name type="ordered locus">PA14_51960</name>
</gene>
<name>Y5196_PSEAB</name>
<protein>
    <recommendedName>
        <fullName evidence="1">UPF0761 membrane protein PA14_51960</fullName>
    </recommendedName>
</protein>
<sequence length="411" mass="46251">MREHFNDGVEFARFLAHRFVTDKAPNSAAALTYTTLFAVVPMMTVMFSMLSLIPAFHGMGESIQTFIFRNFVPSAGEAVETYLKSFTTQARHLTWVGVVFLAVTAFTMLVTIEKAFNEIWRVRQPRRGVGRFLLYWAILSLGPLLLGAGFAVTTYITSLSLLHGPDALPGAETLLGLMPLAFSVAAFTLLYSAVPNARVPVRHALMGGVFTAVLFEAAKTLFGLYVSLFPGYQLIYGAFATVPIFLLWIYLSWMIVLFGAVLVCNLSSSRLWRRRSLPKLIVLLGVLRVFHQRQQLGQSLRLTHLHRAGWLLPEDEWEELLDFLEKEQFVCRAGGGEWVLCRDLGAYSLHRLLNRCPWPMPSRERMPANLDEAWYPPFQQAMERLQVEQEALFGKSLAHWLADGTSGAKVT</sequence>
<reference key="1">
    <citation type="journal article" date="2006" name="Genome Biol.">
        <title>Genomic analysis reveals that Pseudomonas aeruginosa virulence is combinatorial.</title>
        <authorList>
            <person name="Lee D.G."/>
            <person name="Urbach J.M."/>
            <person name="Wu G."/>
            <person name="Liberati N.T."/>
            <person name="Feinbaum R.L."/>
            <person name="Miyata S."/>
            <person name="Diggins L.T."/>
            <person name="He J."/>
            <person name="Saucier M."/>
            <person name="Deziel E."/>
            <person name="Friedman L."/>
            <person name="Li L."/>
            <person name="Grills G."/>
            <person name="Montgomery K."/>
            <person name="Kucherlapati R."/>
            <person name="Rahme L.G."/>
            <person name="Ausubel F.M."/>
        </authorList>
    </citation>
    <scope>NUCLEOTIDE SEQUENCE [LARGE SCALE GENOMIC DNA]</scope>
    <source>
        <strain>UCBPP-PA14</strain>
    </source>
</reference>
<evidence type="ECO:0000255" key="1">
    <source>
        <dbReference type="HAMAP-Rule" id="MF_00672"/>
    </source>
</evidence>
<feature type="chain" id="PRO_1000044722" description="UPF0761 membrane protein PA14_51960">
    <location>
        <begin position="1"/>
        <end position="411"/>
    </location>
</feature>
<feature type="transmembrane region" description="Helical" evidence="1">
    <location>
        <begin position="36"/>
        <end position="56"/>
    </location>
</feature>
<feature type="transmembrane region" description="Helical" evidence="1">
    <location>
        <begin position="92"/>
        <end position="112"/>
    </location>
</feature>
<feature type="transmembrane region" description="Helical" evidence="1">
    <location>
        <begin position="132"/>
        <end position="152"/>
    </location>
</feature>
<feature type="transmembrane region" description="Helical" evidence="1">
    <location>
        <begin position="174"/>
        <end position="194"/>
    </location>
</feature>
<feature type="transmembrane region" description="Helical" evidence="1">
    <location>
        <begin position="207"/>
        <end position="229"/>
    </location>
</feature>
<feature type="transmembrane region" description="Helical" evidence="1">
    <location>
        <begin position="244"/>
        <end position="264"/>
    </location>
</feature>
<organism>
    <name type="scientific">Pseudomonas aeruginosa (strain UCBPP-PA14)</name>
    <dbReference type="NCBI Taxonomy" id="208963"/>
    <lineage>
        <taxon>Bacteria</taxon>
        <taxon>Pseudomonadati</taxon>
        <taxon>Pseudomonadota</taxon>
        <taxon>Gammaproteobacteria</taxon>
        <taxon>Pseudomonadales</taxon>
        <taxon>Pseudomonadaceae</taxon>
        <taxon>Pseudomonas</taxon>
    </lineage>
</organism>
<keyword id="KW-0997">Cell inner membrane</keyword>
<keyword id="KW-1003">Cell membrane</keyword>
<keyword id="KW-0472">Membrane</keyword>
<keyword id="KW-0812">Transmembrane</keyword>
<keyword id="KW-1133">Transmembrane helix</keyword>